<comment type="function">
    <text evidence="1">Catalyzes the reversible phosphorylation of UMP to UDP.</text>
</comment>
<comment type="catalytic activity">
    <reaction evidence="1">
        <text>UMP + ATP = UDP + ADP</text>
        <dbReference type="Rhea" id="RHEA:24400"/>
        <dbReference type="ChEBI" id="CHEBI:30616"/>
        <dbReference type="ChEBI" id="CHEBI:57865"/>
        <dbReference type="ChEBI" id="CHEBI:58223"/>
        <dbReference type="ChEBI" id="CHEBI:456216"/>
        <dbReference type="EC" id="2.7.4.22"/>
    </reaction>
</comment>
<comment type="activity regulation">
    <text evidence="1">Inhibited by UTP.</text>
</comment>
<comment type="pathway">
    <text evidence="1">Pyrimidine metabolism; CTP biosynthesis via de novo pathway; UDP from UMP (UMPK route): step 1/1.</text>
</comment>
<comment type="subunit">
    <text evidence="1">Homohexamer.</text>
</comment>
<comment type="subcellular location">
    <subcellularLocation>
        <location evidence="1">Cytoplasm</location>
    </subcellularLocation>
</comment>
<comment type="similarity">
    <text evidence="1">Belongs to the UMP kinase family.</text>
</comment>
<feature type="chain" id="PRO_0000323846" description="Uridylate kinase">
    <location>
        <begin position="1"/>
        <end position="234"/>
    </location>
</feature>
<feature type="binding site" evidence="1">
    <location>
        <begin position="8"/>
        <end position="11"/>
    </location>
    <ligand>
        <name>ATP</name>
        <dbReference type="ChEBI" id="CHEBI:30616"/>
    </ligand>
</feature>
<feature type="binding site" evidence="1">
    <location>
        <position position="51"/>
    </location>
    <ligand>
        <name>ATP</name>
        <dbReference type="ChEBI" id="CHEBI:30616"/>
    </ligand>
</feature>
<feature type="binding site" evidence="1">
    <location>
        <position position="55"/>
    </location>
    <ligand>
        <name>ATP</name>
        <dbReference type="ChEBI" id="CHEBI:30616"/>
    </ligand>
</feature>
<feature type="binding site" evidence="1">
    <location>
        <position position="68"/>
    </location>
    <ligand>
        <name>UMP</name>
        <dbReference type="ChEBI" id="CHEBI:57865"/>
    </ligand>
</feature>
<feature type="binding site" evidence="1">
    <location>
        <begin position="129"/>
        <end position="136"/>
    </location>
    <ligand>
        <name>UMP</name>
        <dbReference type="ChEBI" id="CHEBI:57865"/>
    </ligand>
</feature>
<feature type="binding site" evidence="1">
    <location>
        <position position="156"/>
    </location>
    <ligand>
        <name>ATP</name>
        <dbReference type="ChEBI" id="CHEBI:30616"/>
    </ligand>
</feature>
<feature type="binding site" evidence="1">
    <location>
        <position position="162"/>
    </location>
    <ligand>
        <name>ATP</name>
        <dbReference type="ChEBI" id="CHEBI:30616"/>
    </ligand>
</feature>
<feature type="binding site" evidence="1">
    <location>
        <position position="165"/>
    </location>
    <ligand>
        <name>ATP</name>
        <dbReference type="ChEBI" id="CHEBI:30616"/>
    </ligand>
</feature>
<proteinExistence type="inferred from homology"/>
<gene>
    <name evidence="1" type="primary">pyrH</name>
    <name type="ordered locus">Fnod_0828</name>
</gene>
<sequence length="234" mass="26093">MYKRVLLKLSGEVLSGEDQKGFNEEHVEYLIKEIKGISEYGTKLGIVIGAGNIFRGRDFEGLRPTISDQIGMLGTVINALYLKDRFENAGIRTVIVSQIVTLPSVKLINYDDIDLYFDAGYVVIFAGGTSNPFFTTDTGAALRAVEMKAELLIKGTKVCGIYDKDPKKYSDAKKYNVITYDEAIEKNLKIMDTEAFSICKRYNMKILVMNFFENGNLLKAIKGENVGTLVVPKV</sequence>
<keyword id="KW-0067">ATP-binding</keyword>
<keyword id="KW-0963">Cytoplasm</keyword>
<keyword id="KW-0418">Kinase</keyword>
<keyword id="KW-0547">Nucleotide-binding</keyword>
<keyword id="KW-0665">Pyrimidine biosynthesis</keyword>
<keyword id="KW-1185">Reference proteome</keyword>
<keyword id="KW-0808">Transferase</keyword>
<name>PYRH_FERNB</name>
<dbReference type="EC" id="2.7.4.22" evidence="1"/>
<dbReference type="EMBL" id="CP000771">
    <property type="protein sequence ID" value="ABS60681.1"/>
    <property type="molecule type" value="Genomic_DNA"/>
</dbReference>
<dbReference type="RefSeq" id="WP_011993997.1">
    <property type="nucleotide sequence ID" value="NC_009718.1"/>
</dbReference>
<dbReference type="SMR" id="A7HL98"/>
<dbReference type="STRING" id="381764.Fnod_0828"/>
<dbReference type="KEGG" id="fno:Fnod_0828"/>
<dbReference type="eggNOG" id="COG0528">
    <property type="taxonomic scope" value="Bacteria"/>
</dbReference>
<dbReference type="HOGENOM" id="CLU_033861_0_0_0"/>
<dbReference type="OrthoDB" id="9807458at2"/>
<dbReference type="UniPathway" id="UPA00159">
    <property type="reaction ID" value="UER00275"/>
</dbReference>
<dbReference type="Proteomes" id="UP000002415">
    <property type="component" value="Chromosome"/>
</dbReference>
<dbReference type="GO" id="GO:0005737">
    <property type="term" value="C:cytoplasm"/>
    <property type="evidence" value="ECO:0007669"/>
    <property type="project" value="UniProtKB-SubCell"/>
</dbReference>
<dbReference type="GO" id="GO:0005524">
    <property type="term" value="F:ATP binding"/>
    <property type="evidence" value="ECO:0007669"/>
    <property type="project" value="UniProtKB-KW"/>
</dbReference>
<dbReference type="GO" id="GO:0033862">
    <property type="term" value="F:UMP kinase activity"/>
    <property type="evidence" value="ECO:0007669"/>
    <property type="project" value="UniProtKB-EC"/>
</dbReference>
<dbReference type="GO" id="GO:0044210">
    <property type="term" value="P:'de novo' CTP biosynthetic process"/>
    <property type="evidence" value="ECO:0007669"/>
    <property type="project" value="UniProtKB-UniRule"/>
</dbReference>
<dbReference type="GO" id="GO:0006225">
    <property type="term" value="P:UDP biosynthetic process"/>
    <property type="evidence" value="ECO:0007669"/>
    <property type="project" value="TreeGrafter"/>
</dbReference>
<dbReference type="CDD" id="cd04254">
    <property type="entry name" value="AAK_UMPK-PyrH-Ec"/>
    <property type="match status" value="1"/>
</dbReference>
<dbReference type="FunFam" id="3.40.1160.10:FF:000001">
    <property type="entry name" value="Uridylate kinase"/>
    <property type="match status" value="1"/>
</dbReference>
<dbReference type="Gene3D" id="3.40.1160.10">
    <property type="entry name" value="Acetylglutamate kinase-like"/>
    <property type="match status" value="1"/>
</dbReference>
<dbReference type="HAMAP" id="MF_01220_B">
    <property type="entry name" value="PyrH_B"/>
    <property type="match status" value="1"/>
</dbReference>
<dbReference type="InterPro" id="IPR036393">
    <property type="entry name" value="AceGlu_kinase-like_sf"/>
</dbReference>
<dbReference type="InterPro" id="IPR001048">
    <property type="entry name" value="Asp/Glu/Uridylate_kinase"/>
</dbReference>
<dbReference type="InterPro" id="IPR011817">
    <property type="entry name" value="Uridylate_kinase"/>
</dbReference>
<dbReference type="InterPro" id="IPR015963">
    <property type="entry name" value="Uridylate_kinase_bac"/>
</dbReference>
<dbReference type="NCBIfam" id="TIGR02075">
    <property type="entry name" value="pyrH_bact"/>
    <property type="match status" value="1"/>
</dbReference>
<dbReference type="PANTHER" id="PTHR42833">
    <property type="entry name" value="URIDYLATE KINASE"/>
    <property type="match status" value="1"/>
</dbReference>
<dbReference type="PANTHER" id="PTHR42833:SF4">
    <property type="entry name" value="URIDYLATE KINASE PUMPKIN, CHLOROPLASTIC"/>
    <property type="match status" value="1"/>
</dbReference>
<dbReference type="Pfam" id="PF00696">
    <property type="entry name" value="AA_kinase"/>
    <property type="match status" value="1"/>
</dbReference>
<dbReference type="PIRSF" id="PIRSF005650">
    <property type="entry name" value="Uridylate_kin"/>
    <property type="match status" value="1"/>
</dbReference>
<dbReference type="SUPFAM" id="SSF53633">
    <property type="entry name" value="Carbamate kinase-like"/>
    <property type="match status" value="1"/>
</dbReference>
<accession>A7HL98</accession>
<organism>
    <name type="scientific">Fervidobacterium nodosum (strain ATCC 35602 / DSM 5306 / Rt17-B1)</name>
    <dbReference type="NCBI Taxonomy" id="381764"/>
    <lineage>
        <taxon>Bacteria</taxon>
        <taxon>Thermotogati</taxon>
        <taxon>Thermotogota</taxon>
        <taxon>Thermotogae</taxon>
        <taxon>Thermotogales</taxon>
        <taxon>Fervidobacteriaceae</taxon>
        <taxon>Fervidobacterium</taxon>
    </lineage>
</organism>
<evidence type="ECO:0000255" key="1">
    <source>
        <dbReference type="HAMAP-Rule" id="MF_01220"/>
    </source>
</evidence>
<reference key="1">
    <citation type="submission" date="2007-07" db="EMBL/GenBank/DDBJ databases">
        <title>Complete sequence of Fervidobacterium nodosum Rt17-B1.</title>
        <authorList>
            <consortium name="US DOE Joint Genome Institute"/>
            <person name="Copeland A."/>
            <person name="Lucas S."/>
            <person name="Lapidus A."/>
            <person name="Barry K."/>
            <person name="Glavina del Rio T."/>
            <person name="Dalin E."/>
            <person name="Tice H."/>
            <person name="Pitluck S."/>
            <person name="Saunders E."/>
            <person name="Brettin T."/>
            <person name="Bruce D."/>
            <person name="Detter J.C."/>
            <person name="Han C."/>
            <person name="Schmutz J."/>
            <person name="Larimer F."/>
            <person name="Land M."/>
            <person name="Hauser L."/>
            <person name="Kyrpides N."/>
            <person name="Mikhailova N."/>
            <person name="Nelson K."/>
            <person name="Gogarten J.P."/>
            <person name="Noll K."/>
            <person name="Richardson P."/>
        </authorList>
    </citation>
    <scope>NUCLEOTIDE SEQUENCE [LARGE SCALE GENOMIC DNA]</scope>
    <source>
        <strain>ATCC 35602 / DSM 5306 / Rt17-B1</strain>
    </source>
</reference>
<protein>
    <recommendedName>
        <fullName evidence="1">Uridylate kinase</fullName>
        <shortName evidence="1">UK</shortName>
        <ecNumber evidence="1">2.7.4.22</ecNumber>
    </recommendedName>
    <alternativeName>
        <fullName evidence="1">Uridine monophosphate kinase</fullName>
        <shortName evidence="1">UMP kinase</shortName>
        <shortName evidence="1">UMPK</shortName>
    </alternativeName>
</protein>